<gene>
    <name type="primary">rarD</name>
    <name type="ordered locus">STY3604</name>
    <name type="ordered locus">t3342</name>
</gene>
<comment type="subcellular location">
    <subcellularLocation>
        <location evidence="1">Cell inner membrane</location>
        <topology evidence="1">Multi-pass membrane protein</topology>
    </subcellularLocation>
</comment>
<comment type="similarity">
    <text evidence="3">Belongs to the EamA transporter family.</text>
</comment>
<proteinExistence type="inferred from homology"/>
<name>RARD_SALTI</name>
<keyword id="KW-0997">Cell inner membrane</keyword>
<keyword id="KW-1003">Cell membrane</keyword>
<keyword id="KW-0472">Membrane</keyword>
<keyword id="KW-0812">Transmembrane</keyword>
<keyword id="KW-1133">Transmembrane helix</keyword>
<keyword id="KW-0813">Transport</keyword>
<dbReference type="EMBL" id="AL513382">
    <property type="protein sequence ID" value="CAD07937.1"/>
    <property type="molecule type" value="Genomic_DNA"/>
</dbReference>
<dbReference type="EMBL" id="AE014613">
    <property type="protein sequence ID" value="AAO70870.1"/>
    <property type="molecule type" value="Genomic_DNA"/>
</dbReference>
<dbReference type="RefSeq" id="NP_457796.1">
    <property type="nucleotide sequence ID" value="NC_003198.1"/>
</dbReference>
<dbReference type="RefSeq" id="WP_000339085.1">
    <property type="nucleotide sequence ID" value="NZ_WSUR01000033.1"/>
</dbReference>
<dbReference type="SMR" id="Q8Z3B1"/>
<dbReference type="STRING" id="220341.gene:17587456"/>
<dbReference type="KEGG" id="stt:t3342"/>
<dbReference type="KEGG" id="sty:STY3604"/>
<dbReference type="PATRIC" id="fig|220341.7.peg.3673"/>
<dbReference type="eggNOG" id="COG2962">
    <property type="taxonomic scope" value="Bacteria"/>
</dbReference>
<dbReference type="HOGENOM" id="CLU_054508_1_0_6"/>
<dbReference type="OMA" id="HRMVWSL"/>
<dbReference type="OrthoDB" id="369870at2"/>
<dbReference type="Proteomes" id="UP000000541">
    <property type="component" value="Chromosome"/>
</dbReference>
<dbReference type="Proteomes" id="UP000002670">
    <property type="component" value="Chromosome"/>
</dbReference>
<dbReference type="GO" id="GO:0005886">
    <property type="term" value="C:plasma membrane"/>
    <property type="evidence" value="ECO:0007669"/>
    <property type="project" value="UniProtKB-SubCell"/>
</dbReference>
<dbReference type="InterPro" id="IPR000620">
    <property type="entry name" value="EamA_dom"/>
</dbReference>
<dbReference type="InterPro" id="IPR004626">
    <property type="entry name" value="RarD"/>
</dbReference>
<dbReference type="NCBIfam" id="NF011959">
    <property type="entry name" value="PRK15430.1"/>
    <property type="match status" value="1"/>
</dbReference>
<dbReference type="NCBIfam" id="TIGR00688">
    <property type="entry name" value="rarD"/>
    <property type="match status" value="1"/>
</dbReference>
<dbReference type="PANTHER" id="PTHR22911">
    <property type="entry name" value="ACYL-MALONYL CONDENSING ENZYME-RELATED"/>
    <property type="match status" value="1"/>
</dbReference>
<dbReference type="PANTHER" id="PTHR22911:SF137">
    <property type="entry name" value="SOLUTE CARRIER FAMILY 35 MEMBER G2-RELATED"/>
    <property type="match status" value="1"/>
</dbReference>
<dbReference type="Pfam" id="PF00892">
    <property type="entry name" value="EamA"/>
    <property type="match status" value="1"/>
</dbReference>
<dbReference type="SUPFAM" id="SSF103481">
    <property type="entry name" value="Multidrug resistance efflux transporter EmrE"/>
    <property type="match status" value="2"/>
</dbReference>
<protein>
    <recommendedName>
        <fullName>Protein RarD</fullName>
    </recommendedName>
</protein>
<reference key="1">
    <citation type="journal article" date="2001" name="Nature">
        <title>Complete genome sequence of a multiple drug resistant Salmonella enterica serovar Typhi CT18.</title>
        <authorList>
            <person name="Parkhill J."/>
            <person name="Dougan G."/>
            <person name="James K.D."/>
            <person name="Thomson N.R."/>
            <person name="Pickard D."/>
            <person name="Wain J."/>
            <person name="Churcher C.M."/>
            <person name="Mungall K.L."/>
            <person name="Bentley S.D."/>
            <person name="Holden M.T.G."/>
            <person name="Sebaihia M."/>
            <person name="Baker S."/>
            <person name="Basham D."/>
            <person name="Brooks K."/>
            <person name="Chillingworth T."/>
            <person name="Connerton P."/>
            <person name="Cronin A."/>
            <person name="Davis P."/>
            <person name="Davies R.M."/>
            <person name="Dowd L."/>
            <person name="White N."/>
            <person name="Farrar J."/>
            <person name="Feltwell T."/>
            <person name="Hamlin N."/>
            <person name="Haque A."/>
            <person name="Hien T.T."/>
            <person name="Holroyd S."/>
            <person name="Jagels K."/>
            <person name="Krogh A."/>
            <person name="Larsen T.S."/>
            <person name="Leather S."/>
            <person name="Moule S."/>
            <person name="O'Gaora P."/>
            <person name="Parry C."/>
            <person name="Quail M.A."/>
            <person name="Rutherford K.M."/>
            <person name="Simmonds M."/>
            <person name="Skelton J."/>
            <person name="Stevens K."/>
            <person name="Whitehead S."/>
            <person name="Barrell B.G."/>
        </authorList>
    </citation>
    <scope>NUCLEOTIDE SEQUENCE [LARGE SCALE GENOMIC DNA]</scope>
    <source>
        <strain>CT18</strain>
    </source>
</reference>
<reference key="2">
    <citation type="journal article" date="2003" name="J. Bacteriol.">
        <title>Comparative genomics of Salmonella enterica serovar Typhi strains Ty2 and CT18.</title>
        <authorList>
            <person name="Deng W."/>
            <person name="Liou S.-R."/>
            <person name="Plunkett G. III"/>
            <person name="Mayhew G.F."/>
            <person name="Rose D.J."/>
            <person name="Burland V."/>
            <person name="Kodoyianni V."/>
            <person name="Schwartz D.C."/>
            <person name="Blattner F.R."/>
        </authorList>
    </citation>
    <scope>NUCLEOTIDE SEQUENCE [LARGE SCALE GENOMIC DNA]</scope>
    <source>
        <strain>ATCC 700931 / Ty2</strain>
    </source>
</reference>
<feature type="chain" id="PRO_0000108153" description="Protein RarD">
    <location>
        <begin position="1"/>
        <end position="294"/>
    </location>
</feature>
<feature type="topological domain" description="Cytoplasmic" evidence="2">
    <location>
        <begin position="1"/>
        <end position="11"/>
    </location>
</feature>
<feature type="transmembrane region" description="Helical" evidence="2">
    <location>
        <begin position="12"/>
        <end position="34"/>
    </location>
</feature>
<feature type="topological domain" description="Periplasmic" evidence="2">
    <location>
        <begin position="35"/>
        <end position="37"/>
    </location>
</feature>
<feature type="transmembrane region" description="Helical" evidence="2">
    <location>
        <begin position="38"/>
        <end position="60"/>
    </location>
</feature>
<feature type="topological domain" description="Cytoplasmic" evidence="2">
    <location>
        <begin position="61"/>
        <end position="72"/>
    </location>
</feature>
<feature type="transmembrane region" description="Helical" evidence="2">
    <location>
        <begin position="73"/>
        <end position="95"/>
    </location>
</feature>
<feature type="topological domain" description="Periplasmic" evidence="2">
    <location>
        <begin position="96"/>
        <end position="99"/>
    </location>
</feature>
<feature type="transmembrane region" description="Helical" evidence="2">
    <location>
        <begin position="100"/>
        <end position="122"/>
    </location>
</feature>
<feature type="topological domain" description="Cytoplasmic" evidence="2">
    <location>
        <begin position="123"/>
        <end position="128"/>
    </location>
</feature>
<feature type="transmembrane region" description="Helical" evidence="2">
    <location>
        <begin position="129"/>
        <end position="146"/>
    </location>
</feature>
<feature type="topological domain" description="Periplasmic" evidence="2">
    <location>
        <begin position="147"/>
        <end position="149"/>
    </location>
</feature>
<feature type="transmembrane region" description="Helical" evidence="2">
    <location>
        <begin position="150"/>
        <end position="167"/>
    </location>
</feature>
<feature type="topological domain" description="Cytoplasmic" evidence="2">
    <location>
        <begin position="168"/>
        <end position="179"/>
    </location>
</feature>
<feature type="transmembrane region" description="Helical" evidence="2">
    <location>
        <begin position="180"/>
        <end position="197"/>
    </location>
</feature>
<feature type="topological domain" description="Periplasmic" evidence="2">
    <location>
        <begin position="198"/>
        <end position="211"/>
    </location>
</feature>
<feature type="transmembrane region" description="Helical" evidence="2">
    <location>
        <begin position="212"/>
        <end position="234"/>
    </location>
</feature>
<feature type="topological domain" description="Cytoplasmic" evidence="2">
    <location>
        <begin position="235"/>
        <end position="238"/>
    </location>
</feature>
<feature type="transmembrane region" description="Helical" evidence="2">
    <location>
        <begin position="239"/>
        <end position="261"/>
    </location>
</feature>
<feature type="topological domain" description="Periplasmic" evidence="2">
    <location>
        <begin position="262"/>
        <end position="270"/>
    </location>
</feature>
<feature type="transmembrane region" description="Helical" evidence="2">
    <location>
        <begin position="271"/>
        <end position="290"/>
    </location>
</feature>
<feature type="topological domain" description="Cytoplasmic" evidence="2">
    <location>
        <begin position="291"/>
        <end position="294"/>
    </location>
</feature>
<feature type="domain" description="EamA">
    <location>
        <begin position="18"/>
        <end position="145"/>
    </location>
</feature>
<evidence type="ECO:0000250" key="1"/>
<evidence type="ECO:0000255" key="2"/>
<evidence type="ECO:0000305" key="3"/>
<organism>
    <name type="scientific">Salmonella typhi</name>
    <dbReference type="NCBI Taxonomy" id="90370"/>
    <lineage>
        <taxon>Bacteria</taxon>
        <taxon>Pseudomonadati</taxon>
        <taxon>Pseudomonadota</taxon>
        <taxon>Gammaproteobacteria</taxon>
        <taxon>Enterobacterales</taxon>
        <taxon>Enterobacteriaceae</taxon>
        <taxon>Salmonella</taxon>
    </lineage>
</organism>
<sequence length="294" mass="32947">MDAKQTRQGVLLALAAYFIWGIAPAYFKLIYYVPADEILTHRVIWSFFFMVALLSVSRQWRQVKRLLKTPKKIFLLALSAVLVGGNWLLFIWAVNNHHMLEASLGYFINPLVNILLGMIFLGERFRRMQWLAVILAVCGVLVQLWTFGSLPIIALGLAFSFAFYGLVRKKIAVEAQTGMLVETLWLLPVAAIYLFSIADSATSHMGQNALSLNLLLMAAGVVTTIPLLCFTGAATRLRLSTLGFFQYIGPTLMFLLAVTFYGEVPGADKMVTFAFIWVALAIFVMDAIYTQRKK</sequence>
<accession>Q8Z3B1</accession>